<feature type="signal peptide" evidence="3">
    <location>
        <begin position="1"/>
        <end position="34"/>
    </location>
</feature>
<feature type="chain" id="PRO_0000307367" description="E3 ubiquitin-protein ligase RNF13">
    <location>
        <begin position="35"/>
        <end position="380"/>
    </location>
</feature>
<feature type="topological domain" description="Lumenal" evidence="3">
    <location>
        <begin position="35"/>
        <end position="182"/>
    </location>
</feature>
<feature type="transmembrane region" description="Helical" evidence="3">
    <location>
        <begin position="183"/>
        <end position="203"/>
    </location>
</feature>
<feature type="topological domain" description="Cytoplasmic" evidence="3">
    <location>
        <begin position="204"/>
        <end position="380"/>
    </location>
</feature>
<feature type="domain" description="PA">
    <location>
        <begin position="65"/>
        <end position="160"/>
    </location>
</feature>
<feature type="zinc finger region" description="RING-type; atypical" evidence="4">
    <location>
        <begin position="240"/>
        <end position="282"/>
    </location>
</feature>
<feature type="region of interest" description="Disordered" evidence="5">
    <location>
        <begin position="285"/>
        <end position="380"/>
    </location>
</feature>
<feature type="compositionally biased region" description="Acidic residues" evidence="5">
    <location>
        <begin position="292"/>
        <end position="304"/>
    </location>
</feature>
<feature type="compositionally biased region" description="Acidic residues" evidence="5">
    <location>
        <begin position="339"/>
        <end position="356"/>
    </location>
</feature>
<feature type="glycosylation site" description="N-linked (GlcNAc...) asparagine" evidence="3">
    <location>
        <position position="88"/>
    </location>
</feature>
<evidence type="ECO:0000250" key="1">
    <source>
        <dbReference type="UniProtKB" id="O43567"/>
    </source>
</evidence>
<evidence type="ECO:0000250" key="2">
    <source>
        <dbReference type="UniProtKB" id="O54965"/>
    </source>
</evidence>
<evidence type="ECO:0000255" key="3"/>
<evidence type="ECO:0000255" key="4">
    <source>
        <dbReference type="PROSITE-ProRule" id="PRU00175"/>
    </source>
</evidence>
<evidence type="ECO:0000256" key="5">
    <source>
        <dbReference type="SAM" id="MobiDB-lite"/>
    </source>
</evidence>
<comment type="function">
    <text evidence="1">E3 ubiquitin-protein ligase that regulates cell proliferation. Involved in apoptosis regulation. Mediates ER stress-induced activation of JNK signaling pathway and apoptosis by promoting ERN1 activation and splicing of XBP1 mRNA. Also involved in protein trafficking and localization.</text>
</comment>
<comment type="catalytic activity">
    <reaction evidence="1">
        <text>S-ubiquitinyl-[E2 ubiquitin-conjugating enzyme]-L-cysteine + [acceptor protein]-L-lysine = [E2 ubiquitin-conjugating enzyme]-L-cysteine + N(6)-ubiquitinyl-[acceptor protein]-L-lysine.</text>
        <dbReference type="EC" id="2.3.2.27"/>
    </reaction>
</comment>
<comment type="pathway">
    <text evidence="1">Protein modification; protein ubiquitination.</text>
</comment>
<comment type="subunit">
    <text evidence="1">Interacts with ERN1.</text>
</comment>
<comment type="subcellular location">
    <subcellularLocation>
        <location evidence="1">Endoplasmic reticulum membrane</location>
        <topology evidence="3">Single-pass type I membrane protein</topology>
    </subcellularLocation>
    <subcellularLocation>
        <location evidence="2">Late endosome membrane</location>
        <topology evidence="3">Single-pass type I membrane protein</topology>
    </subcellularLocation>
    <subcellularLocation>
        <location evidence="1">Lysosome membrane</location>
        <topology evidence="3">Single-pass type I membrane protein</topology>
    </subcellularLocation>
    <subcellularLocation>
        <location evidence="2">Nucleus inner membrane</location>
        <topology evidence="3">Single-pass type I membrane protein</topology>
    </subcellularLocation>
    <text evidence="2">Under certain conditions, relocalizes to recycling endosomes and to the inner nuclear membrane.</text>
</comment>
<comment type="domain">
    <text evidence="1">The RING-type zinc finger domain is required for E3 ligase activity and for promoting ER stress-induced JNK activation and apoptosis.</text>
</comment>
<comment type="PTM">
    <text evidence="1">Autoubiquitinated.</text>
</comment>
<protein>
    <recommendedName>
        <fullName>E3 ubiquitin-protein ligase RNF13</fullName>
        <ecNumber>2.3.2.27</ecNumber>
    </recommendedName>
    <alternativeName>
        <fullName>RING finger protein 13</fullName>
    </alternativeName>
</protein>
<organism>
    <name type="scientific">Bos taurus</name>
    <name type="common">Bovine</name>
    <dbReference type="NCBI Taxonomy" id="9913"/>
    <lineage>
        <taxon>Eukaryota</taxon>
        <taxon>Metazoa</taxon>
        <taxon>Chordata</taxon>
        <taxon>Craniata</taxon>
        <taxon>Vertebrata</taxon>
        <taxon>Euteleostomi</taxon>
        <taxon>Mammalia</taxon>
        <taxon>Eutheria</taxon>
        <taxon>Laurasiatheria</taxon>
        <taxon>Artiodactyla</taxon>
        <taxon>Ruminantia</taxon>
        <taxon>Pecora</taxon>
        <taxon>Bovidae</taxon>
        <taxon>Bovinae</taxon>
        <taxon>Bos</taxon>
    </lineage>
</organism>
<gene>
    <name type="primary">RNF13</name>
</gene>
<reference key="1">
    <citation type="submission" date="2006-08" db="EMBL/GenBank/DDBJ databases">
        <authorList>
            <consortium name="NIH - Mammalian Gene Collection (MGC) project"/>
        </authorList>
    </citation>
    <scope>NUCLEOTIDE SEQUENCE [LARGE SCALE MRNA]</scope>
    <source>
        <strain>Hereford</strain>
        <tissue>Ascending colon</tissue>
    </source>
</reference>
<sequence>MLLSIGMLMLSATQVYTILTVQLFAFLNLLPVEADILAYNFENASQTFDDLPARFGYRLPAEGLKGFLINSKPENACEPIVPPPVRDNSSGTFIVLIRRLDCNFDEKVLNAQRAGYKAAIVHNVDSDDLISMGSNDIEVLKKIDIPSVFIGESSANSLKDEFTYEKGGHIILVPEFSLPLEYYLIPFLIIVGICLILIVIFMITKFVQDRHRARRNRLRKDQLKKLPVHKFKKGDEYDVCAICLDEYEDGDKLRILPCSHAYHCKCVDPWLTKTKKTCPVCKQKVVPSQGDSDSDTDSSQEENEVSEHTPLLRPLASASTQSFGALSESRSHQNMTESSDYEEDDNDTDSSDAENEINEHSVVVQLQPNGERDYNIANTV</sequence>
<keyword id="KW-0256">Endoplasmic reticulum</keyword>
<keyword id="KW-0967">Endosome</keyword>
<keyword id="KW-0325">Glycoprotein</keyword>
<keyword id="KW-0458">Lysosome</keyword>
<keyword id="KW-0472">Membrane</keyword>
<keyword id="KW-0479">Metal-binding</keyword>
<keyword id="KW-0539">Nucleus</keyword>
<keyword id="KW-1185">Reference proteome</keyword>
<keyword id="KW-0732">Signal</keyword>
<keyword id="KW-0808">Transferase</keyword>
<keyword id="KW-0812">Transmembrane</keyword>
<keyword id="KW-1133">Transmembrane helix</keyword>
<keyword id="KW-0832">Ubl conjugation</keyword>
<keyword id="KW-0833">Ubl conjugation pathway</keyword>
<keyword id="KW-0862">Zinc</keyword>
<keyword id="KW-0863">Zinc-finger</keyword>
<accession>Q0VD51</accession>
<name>RNF13_BOVIN</name>
<proteinExistence type="evidence at transcript level"/>
<dbReference type="EC" id="2.3.2.27"/>
<dbReference type="EMBL" id="BC119833">
    <property type="protein sequence ID" value="AAI19834.1"/>
    <property type="molecule type" value="mRNA"/>
</dbReference>
<dbReference type="RefSeq" id="NP_001069610.1">
    <property type="nucleotide sequence ID" value="NM_001076142.1"/>
</dbReference>
<dbReference type="SMR" id="Q0VD51"/>
<dbReference type="FunCoup" id="Q0VD51">
    <property type="interactions" value="2303"/>
</dbReference>
<dbReference type="STRING" id="9913.ENSBTAP00000014803"/>
<dbReference type="GlyCosmos" id="Q0VD51">
    <property type="glycosylation" value="1 site, No reported glycans"/>
</dbReference>
<dbReference type="GlyGen" id="Q0VD51">
    <property type="glycosylation" value="1 site"/>
</dbReference>
<dbReference type="PaxDb" id="9913-ENSBTAP00000014803"/>
<dbReference type="Ensembl" id="ENSBTAT00000014803.5">
    <property type="protein sequence ID" value="ENSBTAP00000014803.4"/>
    <property type="gene ID" value="ENSBTAG00000011147.6"/>
</dbReference>
<dbReference type="GeneID" id="539035"/>
<dbReference type="KEGG" id="bta:539035"/>
<dbReference type="CTD" id="11342"/>
<dbReference type="VEuPathDB" id="HostDB:ENSBTAG00000011147"/>
<dbReference type="VGNC" id="VGNC:34020">
    <property type="gene designation" value="RNF13"/>
</dbReference>
<dbReference type="eggNOG" id="KOG4628">
    <property type="taxonomic scope" value="Eukaryota"/>
</dbReference>
<dbReference type="GeneTree" id="ENSGT00940000154942"/>
<dbReference type="HOGENOM" id="CLU_035275_1_1_1"/>
<dbReference type="InParanoid" id="Q0VD51"/>
<dbReference type="OMA" id="VYTIFTV"/>
<dbReference type="OrthoDB" id="8062037at2759"/>
<dbReference type="TreeFam" id="TF317486"/>
<dbReference type="UniPathway" id="UPA00143"/>
<dbReference type="Proteomes" id="UP000009136">
    <property type="component" value="Chromosome 1"/>
</dbReference>
<dbReference type="Bgee" id="ENSBTAG00000011147">
    <property type="expression patterns" value="Expressed in midbrain and 104 other cell types or tissues"/>
</dbReference>
<dbReference type="GO" id="GO:0005737">
    <property type="term" value="C:cytoplasm"/>
    <property type="evidence" value="ECO:0000318"/>
    <property type="project" value="GO_Central"/>
</dbReference>
<dbReference type="GO" id="GO:0005829">
    <property type="term" value="C:cytosol"/>
    <property type="evidence" value="ECO:0007669"/>
    <property type="project" value="Ensembl"/>
</dbReference>
<dbReference type="GO" id="GO:0005783">
    <property type="term" value="C:endoplasmic reticulum"/>
    <property type="evidence" value="ECO:0000250"/>
    <property type="project" value="UniProtKB"/>
</dbReference>
<dbReference type="GO" id="GO:0005789">
    <property type="term" value="C:endoplasmic reticulum membrane"/>
    <property type="evidence" value="ECO:0007669"/>
    <property type="project" value="UniProtKB-SubCell"/>
</dbReference>
<dbReference type="GO" id="GO:0031902">
    <property type="term" value="C:late endosome membrane"/>
    <property type="evidence" value="ECO:0000250"/>
    <property type="project" value="UniProtKB"/>
</dbReference>
<dbReference type="GO" id="GO:0005765">
    <property type="term" value="C:lysosomal membrane"/>
    <property type="evidence" value="ECO:0000250"/>
    <property type="project" value="UniProtKB"/>
</dbReference>
<dbReference type="GO" id="GO:0005637">
    <property type="term" value="C:nuclear inner membrane"/>
    <property type="evidence" value="ECO:0007669"/>
    <property type="project" value="UniProtKB-SubCell"/>
</dbReference>
<dbReference type="GO" id="GO:0005654">
    <property type="term" value="C:nucleoplasm"/>
    <property type="evidence" value="ECO:0007669"/>
    <property type="project" value="Ensembl"/>
</dbReference>
<dbReference type="GO" id="GO:0008432">
    <property type="term" value="F:JUN kinase binding"/>
    <property type="evidence" value="ECO:0000250"/>
    <property type="project" value="UniProtKB"/>
</dbReference>
<dbReference type="GO" id="GO:0061630">
    <property type="term" value="F:ubiquitin protein ligase activity"/>
    <property type="evidence" value="ECO:0000318"/>
    <property type="project" value="GO_Central"/>
</dbReference>
<dbReference type="GO" id="GO:0004842">
    <property type="term" value="F:ubiquitin-protein transferase activity"/>
    <property type="evidence" value="ECO:0000250"/>
    <property type="project" value="UniProtKB"/>
</dbReference>
<dbReference type="GO" id="GO:0008270">
    <property type="term" value="F:zinc ion binding"/>
    <property type="evidence" value="ECO:0007669"/>
    <property type="project" value="UniProtKB-KW"/>
</dbReference>
<dbReference type="GO" id="GO:0051640">
    <property type="term" value="P:organelle localization"/>
    <property type="evidence" value="ECO:0007669"/>
    <property type="project" value="Ensembl"/>
</dbReference>
<dbReference type="GO" id="GO:0046330">
    <property type="term" value="P:positive regulation of JNK cascade"/>
    <property type="evidence" value="ECO:0000250"/>
    <property type="project" value="UniProtKB"/>
</dbReference>
<dbReference type="GO" id="GO:0051865">
    <property type="term" value="P:protein autoubiquitination"/>
    <property type="evidence" value="ECO:0000250"/>
    <property type="project" value="UniProtKB"/>
</dbReference>
<dbReference type="GO" id="GO:0006511">
    <property type="term" value="P:ubiquitin-dependent protein catabolic process"/>
    <property type="evidence" value="ECO:0000318"/>
    <property type="project" value="GO_Central"/>
</dbReference>
<dbReference type="CDD" id="cd02123">
    <property type="entry name" value="PA_C_RZF_like"/>
    <property type="match status" value="1"/>
</dbReference>
<dbReference type="CDD" id="cd16796">
    <property type="entry name" value="RING-H2_RNF13"/>
    <property type="match status" value="1"/>
</dbReference>
<dbReference type="FunFam" id="3.50.30.30:FF:000012">
    <property type="entry name" value="E3 ubiquitin-protein ligase RNF13"/>
    <property type="match status" value="1"/>
</dbReference>
<dbReference type="FunFam" id="3.30.40.10:FF:000099">
    <property type="entry name" value="E3 ubiquitin-protein ligase RNF167"/>
    <property type="match status" value="1"/>
</dbReference>
<dbReference type="Gene3D" id="3.50.30.30">
    <property type="match status" value="1"/>
</dbReference>
<dbReference type="Gene3D" id="3.30.40.10">
    <property type="entry name" value="Zinc/RING finger domain, C3HC4 (zinc finger)"/>
    <property type="match status" value="1"/>
</dbReference>
<dbReference type="InterPro" id="IPR051653">
    <property type="entry name" value="E3_ligase_sorting_rcpt"/>
</dbReference>
<dbReference type="InterPro" id="IPR046450">
    <property type="entry name" value="PA_dom_sf"/>
</dbReference>
<dbReference type="InterPro" id="IPR003137">
    <property type="entry name" value="PA_domain"/>
</dbReference>
<dbReference type="InterPro" id="IPR001841">
    <property type="entry name" value="Znf_RING"/>
</dbReference>
<dbReference type="InterPro" id="IPR013083">
    <property type="entry name" value="Znf_RING/FYVE/PHD"/>
</dbReference>
<dbReference type="InterPro" id="IPR044744">
    <property type="entry name" value="ZNRF4/RNF13/RNF167_PA"/>
</dbReference>
<dbReference type="PANTHER" id="PTHR47168:SF1">
    <property type="entry name" value="OS02G0798600 PROTEIN"/>
    <property type="match status" value="1"/>
</dbReference>
<dbReference type="PANTHER" id="PTHR47168">
    <property type="entry name" value="RING ZINC FINGER DOMAIN SUPERFAMILY PROTEIN-RELATED"/>
    <property type="match status" value="1"/>
</dbReference>
<dbReference type="Pfam" id="PF02225">
    <property type="entry name" value="PA"/>
    <property type="match status" value="1"/>
</dbReference>
<dbReference type="Pfam" id="PF13639">
    <property type="entry name" value="zf-RING_2"/>
    <property type="match status" value="1"/>
</dbReference>
<dbReference type="SMART" id="SM00184">
    <property type="entry name" value="RING"/>
    <property type="match status" value="1"/>
</dbReference>
<dbReference type="SUPFAM" id="SSF52025">
    <property type="entry name" value="PA domain"/>
    <property type="match status" value="1"/>
</dbReference>
<dbReference type="SUPFAM" id="SSF57850">
    <property type="entry name" value="RING/U-box"/>
    <property type="match status" value="1"/>
</dbReference>
<dbReference type="PROSITE" id="PS50089">
    <property type="entry name" value="ZF_RING_2"/>
    <property type="match status" value="1"/>
</dbReference>